<dbReference type="EC" id="5.3.1.6" evidence="1"/>
<dbReference type="EMBL" id="CP001322">
    <property type="protein sequence ID" value="ACL04663.1"/>
    <property type="molecule type" value="Genomic_DNA"/>
</dbReference>
<dbReference type="RefSeq" id="WP_015947732.1">
    <property type="nucleotide sequence ID" value="NC_011768.1"/>
</dbReference>
<dbReference type="SMR" id="B8FL28"/>
<dbReference type="KEGG" id="dal:Dalk_2973"/>
<dbReference type="eggNOG" id="COG0120">
    <property type="taxonomic scope" value="Bacteria"/>
</dbReference>
<dbReference type="HOGENOM" id="CLU_056590_1_1_7"/>
<dbReference type="UniPathway" id="UPA00115">
    <property type="reaction ID" value="UER00412"/>
</dbReference>
<dbReference type="Proteomes" id="UP000000739">
    <property type="component" value="Chromosome"/>
</dbReference>
<dbReference type="GO" id="GO:0004751">
    <property type="term" value="F:ribose-5-phosphate isomerase activity"/>
    <property type="evidence" value="ECO:0007669"/>
    <property type="project" value="UniProtKB-UniRule"/>
</dbReference>
<dbReference type="GO" id="GO:0009052">
    <property type="term" value="P:pentose-phosphate shunt, non-oxidative branch"/>
    <property type="evidence" value="ECO:0007669"/>
    <property type="project" value="UniProtKB-UniRule"/>
</dbReference>
<dbReference type="CDD" id="cd01398">
    <property type="entry name" value="RPI_A"/>
    <property type="match status" value="1"/>
</dbReference>
<dbReference type="FunFam" id="3.40.50.1360:FF:000001">
    <property type="entry name" value="Ribose-5-phosphate isomerase A"/>
    <property type="match status" value="1"/>
</dbReference>
<dbReference type="Gene3D" id="3.30.70.260">
    <property type="match status" value="1"/>
</dbReference>
<dbReference type="Gene3D" id="3.40.50.1360">
    <property type="match status" value="1"/>
</dbReference>
<dbReference type="HAMAP" id="MF_00170">
    <property type="entry name" value="Rib_5P_isom_A"/>
    <property type="match status" value="1"/>
</dbReference>
<dbReference type="InterPro" id="IPR037171">
    <property type="entry name" value="NagB/RpiA_transferase-like"/>
</dbReference>
<dbReference type="InterPro" id="IPR050262">
    <property type="entry name" value="Ribose-5P_isomerase"/>
</dbReference>
<dbReference type="InterPro" id="IPR020672">
    <property type="entry name" value="Ribose5P_isomerase_typA_subgr"/>
</dbReference>
<dbReference type="InterPro" id="IPR004788">
    <property type="entry name" value="Ribose5P_isomerase_type_A"/>
</dbReference>
<dbReference type="NCBIfam" id="NF001924">
    <property type="entry name" value="PRK00702.1"/>
    <property type="match status" value="1"/>
</dbReference>
<dbReference type="NCBIfam" id="TIGR00021">
    <property type="entry name" value="rpiA"/>
    <property type="match status" value="1"/>
</dbReference>
<dbReference type="PANTHER" id="PTHR43748">
    <property type="entry name" value="RIBOSE-5-PHOSPHATE ISOMERASE 3, CHLOROPLASTIC-RELATED"/>
    <property type="match status" value="1"/>
</dbReference>
<dbReference type="PANTHER" id="PTHR43748:SF3">
    <property type="entry name" value="RIBOSE-5-PHOSPHATE ISOMERASE 3, CHLOROPLASTIC-RELATED"/>
    <property type="match status" value="1"/>
</dbReference>
<dbReference type="Pfam" id="PF06026">
    <property type="entry name" value="Rib_5-P_isom_A"/>
    <property type="match status" value="1"/>
</dbReference>
<dbReference type="SUPFAM" id="SSF75445">
    <property type="entry name" value="D-ribose-5-phosphate isomerase (RpiA), lid domain"/>
    <property type="match status" value="1"/>
</dbReference>
<dbReference type="SUPFAM" id="SSF100950">
    <property type="entry name" value="NagB/RpiA/CoA transferase-like"/>
    <property type="match status" value="1"/>
</dbReference>
<organism>
    <name type="scientific">Desulfatibacillum aliphaticivorans</name>
    <dbReference type="NCBI Taxonomy" id="218208"/>
    <lineage>
        <taxon>Bacteria</taxon>
        <taxon>Pseudomonadati</taxon>
        <taxon>Thermodesulfobacteriota</taxon>
        <taxon>Desulfobacteria</taxon>
        <taxon>Desulfobacterales</taxon>
        <taxon>Desulfatibacillaceae</taxon>
        <taxon>Desulfatibacillum</taxon>
    </lineage>
</organism>
<comment type="function">
    <text evidence="1">Catalyzes the reversible conversion of ribose-5-phosphate to ribulose 5-phosphate.</text>
</comment>
<comment type="catalytic activity">
    <reaction evidence="1">
        <text>aldehydo-D-ribose 5-phosphate = D-ribulose 5-phosphate</text>
        <dbReference type="Rhea" id="RHEA:14657"/>
        <dbReference type="ChEBI" id="CHEBI:58121"/>
        <dbReference type="ChEBI" id="CHEBI:58273"/>
        <dbReference type="EC" id="5.3.1.6"/>
    </reaction>
</comment>
<comment type="pathway">
    <text evidence="1">Carbohydrate degradation; pentose phosphate pathway; D-ribose 5-phosphate from D-ribulose 5-phosphate (non-oxidative stage): step 1/1.</text>
</comment>
<comment type="subunit">
    <text evidence="1">Homodimer.</text>
</comment>
<comment type="similarity">
    <text evidence="1">Belongs to the ribose 5-phosphate isomerase family.</text>
</comment>
<name>RPIA_DESAL</name>
<keyword id="KW-0413">Isomerase</keyword>
<keyword id="KW-1185">Reference proteome</keyword>
<gene>
    <name evidence="1" type="primary">rpiA</name>
    <name type="ordered locus">Dalk_2973</name>
</gene>
<protein>
    <recommendedName>
        <fullName evidence="1">Ribose-5-phosphate isomerase A</fullName>
        <ecNumber evidence="1">5.3.1.6</ecNumber>
    </recommendedName>
    <alternativeName>
        <fullName evidence="1">Phosphoriboisomerase A</fullName>
        <shortName evidence="1">PRI</shortName>
    </alternativeName>
</protein>
<reference key="1">
    <citation type="journal article" date="2012" name="Environ. Microbiol.">
        <title>The genome sequence of Desulfatibacillum alkenivorans AK-01: a blueprint for anaerobic alkane oxidation.</title>
        <authorList>
            <person name="Callaghan A.V."/>
            <person name="Morris B.E."/>
            <person name="Pereira I.A."/>
            <person name="McInerney M.J."/>
            <person name="Austin R.N."/>
            <person name="Groves J.T."/>
            <person name="Kukor J.J."/>
            <person name="Suflita J.M."/>
            <person name="Young L.Y."/>
            <person name="Zylstra G.J."/>
            <person name="Wawrik B."/>
        </authorList>
    </citation>
    <scope>NUCLEOTIDE SEQUENCE [LARGE SCALE GENOMIC DNA]</scope>
    <source>
        <strain>AK-01</strain>
    </source>
</reference>
<sequence length="230" mass="24179">MTSQDALKKQAAEKAVEYLESGMVVGLGSGSTATFAIHAIARLMKEGKLKDIVGIPSSTPTEEVARSLGIPLVGFEEHAVIDVTIDGADEVDPDLNLIKGGGGALLREKVVAQATKKNIIIVDESKISDKLGTIFALPVEVVPFATASETRFLESLGAKVTVRENQLGKAFKTDNHNRILDADFGPMDDAVKIGMALSQRAGVVEHGLFLGTTALVIVAGADGIREMKAA</sequence>
<accession>B8FL28</accession>
<feature type="chain" id="PRO_1000194701" description="Ribose-5-phosphate isomerase A">
    <location>
        <begin position="1"/>
        <end position="230"/>
    </location>
</feature>
<feature type="active site" description="Proton acceptor" evidence="1">
    <location>
        <position position="108"/>
    </location>
</feature>
<feature type="binding site" evidence="1">
    <location>
        <begin position="29"/>
        <end position="32"/>
    </location>
    <ligand>
        <name>substrate</name>
    </ligand>
</feature>
<feature type="binding site" evidence="1">
    <location>
        <begin position="86"/>
        <end position="89"/>
    </location>
    <ligand>
        <name>substrate</name>
    </ligand>
</feature>
<feature type="binding site" evidence="1">
    <location>
        <begin position="99"/>
        <end position="102"/>
    </location>
    <ligand>
        <name>substrate</name>
    </ligand>
</feature>
<feature type="binding site" evidence="1">
    <location>
        <position position="126"/>
    </location>
    <ligand>
        <name>substrate</name>
    </ligand>
</feature>
<evidence type="ECO:0000255" key="1">
    <source>
        <dbReference type="HAMAP-Rule" id="MF_00170"/>
    </source>
</evidence>
<proteinExistence type="inferred from homology"/>